<gene>
    <name evidence="1" type="primary">ravA</name>
    <name type="ordered locus">SEN3693</name>
</gene>
<sequence length="498" mass="56673">MAHPHLLAERISRLSSALEKGLYERSHAIRLCLLAALSGESVFLLGPPGIAKSLIARRLKFAFQRARAFEYLMTRFSTPEEVFGPLSIQALKDEGRYERLTTGYLPEAEIVFLDEIWKAGPAILNTLLTAINERHFRNGAFEEKIPMRLLVAASNELPEADSSLEALYDRMLIRLWLDKVQDKANFRSMLVSQQDESDNPVPASLQVSDEEYQQWQKDIGAISLPDPVFELIFTLRQQLDNLPNAPYVSDRRWKKAIRLLQASAFFSGRDAVAPIDLILLKDCLWYDAQSLNLMQQQLEILMTGHAWQQQAMLTRLGGIVQRRLQLQQQQSDKTAFTVIKEGGMFSRRPHYTLPPEASASTLTLLLQKPLKLHDMEVIHITFDRSALELWLTKGGEIRGKLNGIGFAQTLNMEVDNAQHLVVRDISLQGTRLALPGAAEDSMPAEIKQQLETLENDWRQQHTRFSEQQHCLFIHSDWLGRIEASLQDVGEQIRQAQQC</sequence>
<organism>
    <name type="scientific">Salmonella enteritidis PT4 (strain P125109)</name>
    <dbReference type="NCBI Taxonomy" id="550537"/>
    <lineage>
        <taxon>Bacteria</taxon>
        <taxon>Pseudomonadati</taxon>
        <taxon>Pseudomonadota</taxon>
        <taxon>Gammaproteobacteria</taxon>
        <taxon>Enterobacterales</taxon>
        <taxon>Enterobacteriaceae</taxon>
        <taxon>Salmonella</taxon>
    </lineage>
</organism>
<dbReference type="EC" id="3.6.1.-" evidence="1"/>
<dbReference type="EMBL" id="AM933172">
    <property type="protein sequence ID" value="CAR35269.1"/>
    <property type="molecule type" value="Genomic_DNA"/>
</dbReference>
<dbReference type="RefSeq" id="WP_000940987.1">
    <property type="nucleotide sequence ID" value="NC_011294.1"/>
</dbReference>
<dbReference type="SMR" id="B5QVE6"/>
<dbReference type="KEGG" id="set:SEN3693"/>
<dbReference type="HOGENOM" id="CLU_018678_1_0_6"/>
<dbReference type="Proteomes" id="UP000000613">
    <property type="component" value="Chromosome"/>
</dbReference>
<dbReference type="GO" id="GO:0005737">
    <property type="term" value="C:cytoplasm"/>
    <property type="evidence" value="ECO:0007669"/>
    <property type="project" value="UniProtKB-SubCell"/>
</dbReference>
<dbReference type="GO" id="GO:0005524">
    <property type="term" value="F:ATP binding"/>
    <property type="evidence" value="ECO:0007669"/>
    <property type="project" value="UniProtKB-KW"/>
</dbReference>
<dbReference type="GO" id="GO:0016887">
    <property type="term" value="F:ATP hydrolysis activity"/>
    <property type="evidence" value="ECO:0007669"/>
    <property type="project" value="UniProtKB-UniRule"/>
</dbReference>
<dbReference type="CDD" id="cd00009">
    <property type="entry name" value="AAA"/>
    <property type="match status" value="1"/>
</dbReference>
<dbReference type="FunFam" id="3.40.50.300:FF:000410">
    <property type="entry name" value="ATPase RavA"/>
    <property type="match status" value="1"/>
</dbReference>
<dbReference type="Gene3D" id="1.20.58.1510">
    <property type="match status" value="1"/>
</dbReference>
<dbReference type="Gene3D" id="2.40.128.430">
    <property type="match status" value="1"/>
</dbReference>
<dbReference type="Gene3D" id="3.40.50.300">
    <property type="entry name" value="P-loop containing nucleotide triphosphate hydrolases"/>
    <property type="match status" value="1"/>
</dbReference>
<dbReference type="HAMAP" id="MF_01625">
    <property type="entry name" value="ATPase_RavA"/>
    <property type="match status" value="1"/>
</dbReference>
<dbReference type="InterPro" id="IPR003593">
    <property type="entry name" value="AAA+_ATPase"/>
</dbReference>
<dbReference type="InterPro" id="IPR023671">
    <property type="entry name" value="ATPase_RavA"/>
</dbReference>
<dbReference type="InterPro" id="IPR022547">
    <property type="entry name" value="ATPase_RavA_C"/>
</dbReference>
<dbReference type="InterPro" id="IPR045427">
    <property type="entry name" value="MoxR"/>
</dbReference>
<dbReference type="InterPro" id="IPR027417">
    <property type="entry name" value="P-loop_NTPase"/>
</dbReference>
<dbReference type="InterPro" id="IPR041538">
    <property type="entry name" value="RavA-like_AAA_lid"/>
</dbReference>
<dbReference type="InterPro" id="IPR050513">
    <property type="entry name" value="RavA_ATPases"/>
</dbReference>
<dbReference type="InterPro" id="IPR046898">
    <property type="entry name" value="RavA_LARA_dom"/>
</dbReference>
<dbReference type="InterPro" id="IPR046932">
    <property type="entry name" value="RavA_LARA_sf"/>
</dbReference>
<dbReference type="NCBIfam" id="NF010054">
    <property type="entry name" value="PRK13531.1"/>
    <property type="match status" value="1"/>
</dbReference>
<dbReference type="PANTHER" id="PTHR32204">
    <property type="entry name" value="ATPASE RAVA"/>
    <property type="match status" value="1"/>
</dbReference>
<dbReference type="PANTHER" id="PTHR32204:SF0">
    <property type="entry name" value="ATPASE RAVA"/>
    <property type="match status" value="1"/>
</dbReference>
<dbReference type="Pfam" id="PF17868">
    <property type="entry name" value="AAA_lid_8"/>
    <property type="match status" value="1"/>
</dbReference>
<dbReference type="Pfam" id="PF12592">
    <property type="entry name" value="ATPase_RavA_C"/>
    <property type="match status" value="1"/>
</dbReference>
<dbReference type="Pfam" id="PF20030">
    <property type="entry name" value="bpMoxR"/>
    <property type="match status" value="1"/>
</dbReference>
<dbReference type="Pfam" id="PF20265">
    <property type="entry name" value="LARA_dom"/>
    <property type="match status" value="1"/>
</dbReference>
<dbReference type="SMART" id="SM00382">
    <property type="entry name" value="AAA"/>
    <property type="match status" value="1"/>
</dbReference>
<dbReference type="SUPFAM" id="SSF52540">
    <property type="entry name" value="P-loop containing nucleoside triphosphate hydrolases"/>
    <property type="match status" value="1"/>
</dbReference>
<proteinExistence type="inferred from homology"/>
<reference key="1">
    <citation type="journal article" date="2008" name="Genome Res.">
        <title>Comparative genome analysis of Salmonella enteritidis PT4 and Salmonella gallinarum 287/91 provides insights into evolutionary and host adaptation pathways.</title>
        <authorList>
            <person name="Thomson N.R."/>
            <person name="Clayton D.J."/>
            <person name="Windhorst D."/>
            <person name="Vernikos G."/>
            <person name="Davidson S."/>
            <person name="Churcher C."/>
            <person name="Quail M.A."/>
            <person name="Stevens M."/>
            <person name="Jones M.A."/>
            <person name="Watson M."/>
            <person name="Barron A."/>
            <person name="Layton A."/>
            <person name="Pickard D."/>
            <person name="Kingsley R.A."/>
            <person name="Bignell A."/>
            <person name="Clark L."/>
            <person name="Harris B."/>
            <person name="Ormond D."/>
            <person name="Abdellah Z."/>
            <person name="Brooks K."/>
            <person name="Cherevach I."/>
            <person name="Chillingworth T."/>
            <person name="Woodward J."/>
            <person name="Norberczak H."/>
            <person name="Lord A."/>
            <person name="Arrowsmith C."/>
            <person name="Jagels K."/>
            <person name="Moule S."/>
            <person name="Mungall K."/>
            <person name="Saunders M."/>
            <person name="Whitehead S."/>
            <person name="Chabalgoity J.A."/>
            <person name="Maskell D."/>
            <person name="Humphreys T."/>
            <person name="Roberts M."/>
            <person name="Barrow P.A."/>
            <person name="Dougan G."/>
            <person name="Parkhill J."/>
        </authorList>
    </citation>
    <scope>NUCLEOTIDE SEQUENCE [LARGE SCALE GENOMIC DNA]</scope>
    <source>
        <strain>P125109</strain>
    </source>
</reference>
<comment type="function">
    <text evidence="1">Component of the RavA-ViaA chaperone complex, which may act on the membrane to optimize the function of some of the respiratory chains. RavA functions as an ATPase.</text>
</comment>
<comment type="catalytic activity">
    <reaction evidence="1">
        <text>ATP + H2O = ADP + phosphate + H(+)</text>
        <dbReference type="Rhea" id="RHEA:13065"/>
        <dbReference type="ChEBI" id="CHEBI:15377"/>
        <dbReference type="ChEBI" id="CHEBI:15378"/>
        <dbReference type="ChEBI" id="CHEBI:30616"/>
        <dbReference type="ChEBI" id="CHEBI:43474"/>
        <dbReference type="ChEBI" id="CHEBI:456216"/>
    </reaction>
</comment>
<comment type="activity regulation">
    <text evidence="1">ATPase activity is stimulated by ViaA.</text>
</comment>
<comment type="subunit">
    <text evidence="1">Homohexamer. Interacts with ViaA.</text>
</comment>
<comment type="subcellular location">
    <subcellularLocation>
        <location evidence="1">Cytoplasm</location>
    </subcellularLocation>
</comment>
<comment type="similarity">
    <text evidence="1">Belongs to the RavA family.</text>
</comment>
<keyword id="KW-0067">ATP-binding</keyword>
<keyword id="KW-0143">Chaperone</keyword>
<keyword id="KW-0963">Cytoplasm</keyword>
<keyword id="KW-0378">Hydrolase</keyword>
<keyword id="KW-0547">Nucleotide-binding</keyword>
<feature type="chain" id="PRO_1000186131" description="Regulatory ATPase RavA">
    <location>
        <begin position="1"/>
        <end position="498"/>
    </location>
</feature>
<feature type="binding site" evidence="1">
    <location>
        <position position="23"/>
    </location>
    <ligand>
        <name>ADP</name>
        <dbReference type="ChEBI" id="CHEBI:456216"/>
    </ligand>
</feature>
<feature type="binding site" evidence="1">
    <location>
        <position position="49"/>
    </location>
    <ligand>
        <name>ADP</name>
        <dbReference type="ChEBI" id="CHEBI:456216"/>
    </ligand>
</feature>
<feature type="binding site" evidence="1">
    <location>
        <position position="50"/>
    </location>
    <ligand>
        <name>ADP</name>
        <dbReference type="ChEBI" id="CHEBI:456216"/>
    </ligand>
</feature>
<feature type="binding site" evidence="1">
    <location>
        <position position="51"/>
    </location>
    <ligand>
        <name>ADP</name>
        <dbReference type="ChEBI" id="CHEBI:456216"/>
    </ligand>
</feature>
<feature type="binding site" evidence="1">
    <location>
        <position position="52"/>
    </location>
    <ligand>
        <name>ADP</name>
        <dbReference type="ChEBI" id="CHEBI:456216"/>
    </ligand>
</feature>
<feature type="binding site" evidence="1">
    <location>
        <position position="53"/>
    </location>
    <ligand>
        <name>ADP</name>
        <dbReference type="ChEBI" id="CHEBI:456216"/>
    </ligand>
</feature>
<feature type="binding site" evidence="1">
    <location>
        <position position="54"/>
    </location>
    <ligand>
        <name>ADP</name>
        <dbReference type="ChEBI" id="CHEBI:456216"/>
    </ligand>
</feature>
<feature type="binding site" evidence="1">
    <location>
        <position position="196"/>
    </location>
    <ligand>
        <name>ADP</name>
        <dbReference type="ChEBI" id="CHEBI:456216"/>
    </ligand>
</feature>
<protein>
    <recommendedName>
        <fullName evidence="1">Regulatory ATPase RavA</fullName>
        <ecNumber evidence="1">3.6.1.-</ecNumber>
    </recommendedName>
    <alternativeName>
        <fullName evidence="1">Regulatory ATPase variant A</fullName>
    </alternativeName>
</protein>
<accession>B5QVE6</accession>
<name>RAVA_SALEP</name>
<evidence type="ECO:0000255" key="1">
    <source>
        <dbReference type="HAMAP-Rule" id="MF_01625"/>
    </source>
</evidence>